<sequence length="227" mass="25079">MDGFSNMEQAPLAYQEVQWLAETFVTFMGLGWLINYVLMIWHSRRGEPSSMALIPLCNNIAWELVYTIIYPSPNKVELAAFIAGVTLNFLIMTSAARSARSEWSHSPTMAKHAGLIIVAGILMCFTGHVALAMEIGPALAYSWGAVICQLALSIGGVCQLLQQHSTGGTSWKLWSSRFLGSCCAVGFAFLRWRYWPEAYGWLASPLILWSLATFLVADLTYGVCLLL</sequence>
<keyword id="KW-0456">Lyase</keyword>
<keyword id="KW-0472">Membrane</keyword>
<keyword id="KW-0812">Transmembrane</keyword>
<keyword id="KW-1133">Transmembrane helix</keyword>
<reference key="1">
    <citation type="journal article" date="2006" name="Fungal Genet. Biol.">
        <title>A complex gene cluster for indole-diterpene biosynthesis in the grass endophyte Neotyphodium lolii.</title>
        <authorList>
            <person name="Young C.A."/>
            <person name="Felitti S."/>
            <person name="Shields K."/>
            <person name="Spangenberg G."/>
            <person name="Johnson R.D."/>
            <person name="Bryan G.T."/>
            <person name="Saikia S."/>
            <person name="Scott B."/>
        </authorList>
    </citation>
    <scope>NUCLEOTIDE SEQUENCE [GENOMIC DNA]</scope>
    <scope>FUNCTION</scope>
    <scope>PATHWAY</scope>
    <source>
        <strain>Lp19</strain>
    </source>
</reference>
<reference key="2">
    <citation type="journal article" date="2005" name="Mol. Genet. Genomics">
        <title>Molecular cloning and genetic analysis of a symbiosis-expressed gene cluster for lolitrem biosynthesis from a mutualistic endophyte of perennial ryegrass.</title>
        <authorList>
            <person name="Young C.A."/>
            <person name="Bryant M.K."/>
            <person name="Christensen M.J."/>
            <person name="Tapper B.A."/>
            <person name="Bryan G.T."/>
            <person name="Scott B."/>
        </authorList>
    </citation>
    <scope>FUNCTION</scope>
    <source>
        <strain>Lp19</strain>
    </source>
</reference>
<reference key="3">
    <citation type="journal article" date="2010" name="Plant Physiol.">
        <title>Disruption of signaling in a fungal-grass symbiosis leads to pathogenesis.</title>
        <authorList>
            <person name="Eaton C.J."/>
            <person name="Cox M.P."/>
            <person name="Ambrose B."/>
            <person name="Becker M."/>
            <person name="Hesse U."/>
            <person name="Schardl C.L."/>
            <person name="Scott B."/>
        </authorList>
    </citation>
    <scope>INDUCTION</scope>
</reference>
<reference key="4">
    <citation type="journal article" date="2012" name="FEBS Lett.">
        <title>Functional analysis of an indole-diterpene gene cluster for lolitrem B biosynthesis in the grass endosymbiont Epichloe festucae.</title>
        <authorList>
            <person name="Saikia S."/>
            <person name="Takemoto D."/>
            <person name="Tapper B.A."/>
            <person name="Lane G.A."/>
            <person name="Fraser K."/>
            <person name="Scott B."/>
        </authorList>
    </citation>
    <scope>FUNCTION</scope>
</reference>
<accession>Q15FB1</accession>
<comment type="function">
    <text evidence="3 4 6">Terpene cyclase; part of the gene cluster that mediates the biosynthesis of lolitrems, indole-diterpene mycotoxins that are potent tremorgens in mammals, and are synthesized by clavicipitaceous fungal endophytes in association with their grass hosts (PubMed:16765617). The geranylgeranyl diphosphate (GGPP) synthase ltmG is proposed to catalyze the first step in lolitrem biosynthesis (PubMed:15991026, PubMed:16765617). LtmG catalyzes a series of iterative condensations of isopentenyl diphosphate (IPP) with dimethylallyl diphosphate (DMAPP), geranyl diphosphate (GPP), and farnesyl diphosphate (FPP), to form GGPP (PubMed:15991026, PubMed:16765617). GGPP then condenses with indole-3-glycerol phosphate to form 3-geranylgeranylindole, an acyclic intermediate, to be incorporated into paxilline (PubMed:16765617). Either ltmG or ltmC could be responsible for this step, as both are putative prenyl transferases (PubMed:16765617). The FAD-dependent monooxygenase ltmM then catalyzes the epoxidation of the two terminal alkenes of the geranylgeranyl moiety, which is subsequently cyclized by ltmB, to paspaline (PubMed:15991026, PubMed:16765617). The cytochrome P450 monooxygenases ltmQ and ltmP can sequentially oxidize paspaline to terpendole E and terpendole F (PubMed:22750140). Alternatively, ltmP converts paspaline to an intermediate which is oxidized by ltmQ to terpendole F (PubMed:22750140). LtmF, ltmK, ltmE and ltmJ appear to be unique to the epichloe endophytes (PubMed:15991026, PubMed:16765617). The prenyltransferase ltmF is involved in the 27-hydroxyl-O-prenylation (PubMed:22750140). The cytochrome P450 monooxygenase ltmK is required for the oxidative acetal ring formation (PubMed:22750140). The multi-functional prenyltransferase ltmE is required for C20- and C21-prenylations of the indole ring of paspalanes and acts together with the cytochrome P450 monooxygenase ltmJ to yield lolitremanes by multiple oxidations and ring closures (PubMed:22750140). The stereoisomer pairs of lolitriol and lolitrem N or lolitrem B and lolitrem F may be attributed to variations in the way in which ring closure can occur under the action of ltmJ (PubMed:22750140). While the major product of this pathway is lolitrem B, the prenyl transferases and cytochrome P450 monooxygenases identified in this pathway have a remarkable versatility in their regio- and stereo-specificities to generate a diverse range of metabolites that are products of a metabolic grid rather than a linear pathway (PubMed:22750140).</text>
</comment>
<comment type="pathway">
    <text evidence="9">Secondary metabolite biosynthesis.</text>
</comment>
<comment type="subcellular location">
    <subcellularLocation>
        <location evidence="2">Membrane</location>
        <topology evidence="2">Multi-pass membrane protein</topology>
    </subcellularLocation>
</comment>
<comment type="induction">
    <text evidence="5">Expression is down-regulated when the stress-activated mitogen-activated protein kinase (sakA) is deleted (PubMed:20519633).</text>
</comment>
<comment type="similarity">
    <text evidence="8">Belongs to the paxB family.</text>
</comment>
<name>LTMB_EPIFI</name>
<gene>
    <name evidence="7" type="primary">ltmB</name>
</gene>
<feature type="chain" id="PRO_0000444323" description="Terpene cyclase ltmB">
    <location>
        <begin position="1"/>
        <end position="227"/>
    </location>
</feature>
<feature type="transmembrane region" description="Helical" evidence="2">
    <location>
        <begin position="20"/>
        <end position="40"/>
    </location>
</feature>
<feature type="transmembrane region" description="Helical" evidence="2">
    <location>
        <begin position="51"/>
        <end position="71"/>
    </location>
</feature>
<feature type="transmembrane region" description="Helical" evidence="2">
    <location>
        <begin position="76"/>
        <end position="96"/>
    </location>
</feature>
<feature type="transmembrane region" description="Helical" evidence="2">
    <location>
        <begin position="113"/>
        <end position="133"/>
    </location>
</feature>
<feature type="transmembrane region" description="Helical" evidence="2">
    <location>
        <begin position="135"/>
        <end position="155"/>
    </location>
</feature>
<feature type="transmembrane region" description="Helical" evidence="2">
    <location>
        <begin position="173"/>
        <end position="195"/>
    </location>
</feature>
<feature type="transmembrane region" description="Helical" evidence="2">
    <location>
        <begin position="206"/>
        <end position="226"/>
    </location>
</feature>
<organism>
    <name type="scientific">Epichloe festucae var. lolii</name>
    <name type="common">Neotyphodium lolii</name>
    <name type="synonym">Acremonium lolii</name>
    <dbReference type="NCBI Taxonomy" id="73839"/>
    <lineage>
        <taxon>Eukaryota</taxon>
        <taxon>Fungi</taxon>
        <taxon>Dikarya</taxon>
        <taxon>Ascomycota</taxon>
        <taxon>Pezizomycotina</taxon>
        <taxon>Sordariomycetes</taxon>
        <taxon>Hypocreomycetidae</taxon>
        <taxon>Hypocreales</taxon>
        <taxon>Clavicipitaceae</taxon>
        <taxon>Epichloe</taxon>
    </lineage>
</organism>
<dbReference type="EC" id="4.2.3.-" evidence="1"/>
<dbReference type="EMBL" id="DQ443465">
    <property type="protein sequence ID" value="ABF20226.1"/>
    <property type="molecule type" value="Genomic_DNA"/>
</dbReference>
<dbReference type="GO" id="GO:0016020">
    <property type="term" value="C:membrane"/>
    <property type="evidence" value="ECO:0007669"/>
    <property type="project" value="UniProtKB-SubCell"/>
</dbReference>
<dbReference type="GO" id="GO:0016829">
    <property type="term" value="F:lyase activity"/>
    <property type="evidence" value="ECO:0007669"/>
    <property type="project" value="UniProtKB-KW"/>
</dbReference>
<dbReference type="InterPro" id="IPR039020">
    <property type="entry name" value="PaxB-like"/>
</dbReference>
<dbReference type="PANTHER" id="PTHR42038">
    <property type="match status" value="1"/>
</dbReference>
<dbReference type="PANTHER" id="PTHR42038:SF2">
    <property type="entry name" value="TERPENE CYCLASE AUSL"/>
    <property type="match status" value="1"/>
</dbReference>
<dbReference type="Pfam" id="PF25129">
    <property type="entry name" value="Pyr4-TMTC"/>
    <property type="match status" value="1"/>
</dbReference>
<protein>
    <recommendedName>
        <fullName evidence="1">Terpene cyclase ltmB</fullName>
        <ecNumber evidence="1">4.2.3.-</ecNumber>
    </recommendedName>
    <alternativeName>
        <fullName evidence="7">Lolitrem B biosynthesis cluster 2 protein B</fullName>
    </alternativeName>
</protein>
<proteinExistence type="evidence at transcript level"/>
<evidence type="ECO:0000250" key="1">
    <source>
        <dbReference type="UniProtKB" id="Q0C8A7"/>
    </source>
</evidence>
<evidence type="ECO:0000255" key="2"/>
<evidence type="ECO:0000269" key="3">
    <source>
    </source>
</evidence>
<evidence type="ECO:0000269" key="4">
    <source>
    </source>
</evidence>
<evidence type="ECO:0000269" key="5">
    <source>
    </source>
</evidence>
<evidence type="ECO:0000269" key="6">
    <source>
    </source>
</evidence>
<evidence type="ECO:0000303" key="7">
    <source>
    </source>
</evidence>
<evidence type="ECO:0000305" key="8"/>
<evidence type="ECO:0000305" key="9">
    <source>
    </source>
</evidence>